<accession>B1XC38</accession>
<organism>
    <name type="scientific">Escherichia coli (strain K12 / DH10B)</name>
    <dbReference type="NCBI Taxonomy" id="316385"/>
    <lineage>
        <taxon>Bacteria</taxon>
        <taxon>Pseudomonadati</taxon>
        <taxon>Pseudomonadota</taxon>
        <taxon>Gammaproteobacteria</taxon>
        <taxon>Enterobacterales</taxon>
        <taxon>Enterobacteriaceae</taxon>
        <taxon>Escherichia</taxon>
    </lineage>
</organism>
<protein>
    <recommendedName>
        <fullName evidence="1">Chorismate pyruvate-lyase</fullName>
        <shortName evidence="1">CL</shortName>
        <shortName evidence="1">CPL</shortName>
        <ecNumber evidence="1">4.1.3.40</ecNumber>
    </recommendedName>
</protein>
<keyword id="KW-0963">Cytoplasm</keyword>
<keyword id="KW-0456">Lyase</keyword>
<keyword id="KW-0670">Pyruvate</keyword>
<keyword id="KW-0831">Ubiquinone biosynthesis</keyword>
<comment type="function">
    <text evidence="1">Removes the pyruvyl group from chorismate, with concomitant aromatization of the ring, to provide 4-hydroxybenzoate (4HB) for the ubiquinone pathway.</text>
</comment>
<comment type="catalytic activity">
    <reaction evidence="1">
        <text>chorismate = 4-hydroxybenzoate + pyruvate</text>
        <dbReference type="Rhea" id="RHEA:16505"/>
        <dbReference type="ChEBI" id="CHEBI:15361"/>
        <dbReference type="ChEBI" id="CHEBI:17879"/>
        <dbReference type="ChEBI" id="CHEBI:29748"/>
        <dbReference type="EC" id="4.1.3.40"/>
    </reaction>
</comment>
<comment type="pathway">
    <text evidence="1">Cofactor biosynthesis; ubiquinone biosynthesis.</text>
</comment>
<comment type="subunit">
    <text evidence="1">Monomer.</text>
</comment>
<comment type="subcellular location">
    <subcellularLocation>
        <location evidence="1">Cytoplasm</location>
    </subcellularLocation>
</comment>
<comment type="similarity">
    <text evidence="1">Belongs to the UbiC family.</text>
</comment>
<proteinExistence type="inferred from homology"/>
<name>UBIC_ECODH</name>
<dbReference type="EC" id="4.1.3.40" evidence="1"/>
<dbReference type="EMBL" id="CP000948">
    <property type="protein sequence ID" value="ACB05038.1"/>
    <property type="molecule type" value="Genomic_DNA"/>
</dbReference>
<dbReference type="RefSeq" id="WP_001326644.1">
    <property type="nucleotide sequence ID" value="NC_010473.1"/>
</dbReference>
<dbReference type="SMR" id="B1XC38"/>
<dbReference type="KEGG" id="ecd:ECDH10B_4228"/>
<dbReference type="HOGENOM" id="CLU_096824_1_0_6"/>
<dbReference type="UniPathway" id="UPA00232"/>
<dbReference type="GO" id="GO:0005829">
    <property type="term" value="C:cytosol"/>
    <property type="evidence" value="ECO:0007669"/>
    <property type="project" value="TreeGrafter"/>
</dbReference>
<dbReference type="GO" id="GO:0008813">
    <property type="term" value="F:chorismate lyase activity"/>
    <property type="evidence" value="ECO:0007669"/>
    <property type="project" value="UniProtKB-UniRule"/>
</dbReference>
<dbReference type="GO" id="GO:0042866">
    <property type="term" value="P:pyruvate biosynthetic process"/>
    <property type="evidence" value="ECO:0007669"/>
    <property type="project" value="UniProtKB-UniRule"/>
</dbReference>
<dbReference type="GO" id="GO:0006744">
    <property type="term" value="P:ubiquinone biosynthetic process"/>
    <property type="evidence" value="ECO:0007669"/>
    <property type="project" value="UniProtKB-UniRule"/>
</dbReference>
<dbReference type="FunFam" id="3.40.1410.10:FF:000002">
    <property type="entry name" value="Chorismate pyruvate-lyase"/>
    <property type="match status" value="1"/>
</dbReference>
<dbReference type="Gene3D" id="3.40.1410.10">
    <property type="entry name" value="Chorismate lyase-like"/>
    <property type="match status" value="1"/>
</dbReference>
<dbReference type="HAMAP" id="MF_01632">
    <property type="entry name" value="UbiC"/>
    <property type="match status" value="1"/>
</dbReference>
<dbReference type="InterPro" id="IPR007440">
    <property type="entry name" value="Chorismate--pyruvate_lyase"/>
</dbReference>
<dbReference type="InterPro" id="IPR028978">
    <property type="entry name" value="Chorismate_lyase_/UTRA_dom_sf"/>
</dbReference>
<dbReference type="NCBIfam" id="NF008656">
    <property type="entry name" value="PRK11655.1"/>
    <property type="match status" value="1"/>
</dbReference>
<dbReference type="PANTHER" id="PTHR38683">
    <property type="entry name" value="CHORISMATE PYRUVATE-LYASE"/>
    <property type="match status" value="1"/>
</dbReference>
<dbReference type="PANTHER" id="PTHR38683:SF1">
    <property type="entry name" value="CHORISMATE PYRUVATE-LYASE"/>
    <property type="match status" value="1"/>
</dbReference>
<dbReference type="Pfam" id="PF04345">
    <property type="entry name" value="Chor_lyase"/>
    <property type="match status" value="1"/>
</dbReference>
<dbReference type="SUPFAM" id="SSF64288">
    <property type="entry name" value="Chorismate lyase-like"/>
    <property type="match status" value="1"/>
</dbReference>
<evidence type="ECO:0000255" key="1">
    <source>
        <dbReference type="HAMAP-Rule" id="MF_01632"/>
    </source>
</evidence>
<feature type="chain" id="PRO_1000186524" description="Chorismate pyruvate-lyase">
    <location>
        <begin position="1"/>
        <end position="165"/>
    </location>
</feature>
<feature type="binding site" evidence="1">
    <location>
        <position position="35"/>
    </location>
    <ligand>
        <name>substrate</name>
    </ligand>
</feature>
<feature type="binding site" evidence="1">
    <location>
        <position position="77"/>
    </location>
    <ligand>
        <name>substrate</name>
    </ligand>
</feature>
<feature type="binding site" evidence="1">
    <location>
        <position position="115"/>
    </location>
    <ligand>
        <name>substrate</name>
    </ligand>
</feature>
<feature type="binding site" evidence="1">
    <location>
        <position position="156"/>
    </location>
    <ligand>
        <name>substrate</name>
    </ligand>
</feature>
<gene>
    <name evidence="1" type="primary">ubiC</name>
    <name type="ordered locus">ECDH10B_4228</name>
</gene>
<sequence>MSHPALTQLRALRYCKEIPALDPQLLDWLLLEDSMTKRFEQQGKTVSVTMIREGFVEQNEIPEELPLLPKESRYWLREILLCADGEPWLAGRTVVPVSTLSGPELALQKLGKTPLGRYLFTSSTLTRDFIEIGRDAGLWGRRSRLRLSGKPLLLTELFLPASPLY</sequence>
<reference key="1">
    <citation type="journal article" date="2008" name="J. Bacteriol.">
        <title>The complete genome sequence of Escherichia coli DH10B: insights into the biology of a laboratory workhorse.</title>
        <authorList>
            <person name="Durfee T."/>
            <person name="Nelson R."/>
            <person name="Baldwin S."/>
            <person name="Plunkett G. III"/>
            <person name="Burland V."/>
            <person name="Mau B."/>
            <person name="Petrosino J.F."/>
            <person name="Qin X."/>
            <person name="Muzny D.M."/>
            <person name="Ayele M."/>
            <person name="Gibbs R.A."/>
            <person name="Csorgo B."/>
            <person name="Posfai G."/>
            <person name="Weinstock G.M."/>
            <person name="Blattner F.R."/>
        </authorList>
    </citation>
    <scope>NUCLEOTIDE SEQUENCE [LARGE SCALE GENOMIC DNA]</scope>
    <source>
        <strain>K12 / DH10B</strain>
    </source>
</reference>